<sequence length="347" mass="38777">MLFDYINALLKKPTLRTPIWVMRQAGRYLPEYRETRIKAGDFLTLCKSPELACEVTMQPIDRFDLDAAILFSDILTIPDAMGLGLYFLEGEGPKFSNPLNTLSSIEQLKKPNVGNELSYVTDAVSVIKKALNNKVPLIGFTGSPWTLATYMVEGGSSKNFVKVKGLMYENPVYMHQLLDKLSDIIIDYLNGQIQVGVDSVMIFDTWGGLLNKQSYEDFSLQYMTKIVNGIKRKFNGKTIPITLFTKGGAMWLEQIANSGCDGVALDWTVELNDAQQRIGAKVALQGNLDPCVLYASPEKIREEVKKILSQFQGDTGHVFNLGHGISPDVNPEHMKVLVDVVHEFSKR</sequence>
<feature type="chain" id="PRO_0000325690" description="Uroporphyrinogen decarboxylase">
    <location>
        <begin position="1"/>
        <end position="347"/>
    </location>
</feature>
<feature type="binding site" evidence="1">
    <location>
        <begin position="23"/>
        <end position="27"/>
    </location>
    <ligand>
        <name>substrate</name>
    </ligand>
</feature>
<feature type="binding site" evidence="1">
    <location>
        <position position="73"/>
    </location>
    <ligand>
        <name>substrate</name>
    </ligand>
</feature>
<feature type="binding site" evidence="1">
    <location>
        <position position="150"/>
    </location>
    <ligand>
        <name>substrate</name>
    </ligand>
</feature>
<feature type="binding site" evidence="1">
    <location>
        <position position="205"/>
    </location>
    <ligand>
        <name>substrate</name>
    </ligand>
</feature>
<feature type="binding site" evidence="1">
    <location>
        <position position="323"/>
    </location>
    <ligand>
        <name>substrate</name>
    </ligand>
</feature>
<feature type="site" description="Transition state stabilizer" evidence="1">
    <location>
        <position position="73"/>
    </location>
</feature>
<name>DCUP_RUTMC</name>
<keyword id="KW-0963">Cytoplasm</keyword>
<keyword id="KW-0210">Decarboxylase</keyword>
<keyword id="KW-0456">Lyase</keyword>
<keyword id="KW-0627">Porphyrin biosynthesis</keyword>
<proteinExistence type="inferred from homology"/>
<comment type="function">
    <text evidence="1">Catalyzes the decarboxylation of four acetate groups of uroporphyrinogen-III to yield coproporphyrinogen-III.</text>
</comment>
<comment type="catalytic activity">
    <reaction evidence="1">
        <text>uroporphyrinogen III + 4 H(+) = coproporphyrinogen III + 4 CO2</text>
        <dbReference type="Rhea" id="RHEA:19865"/>
        <dbReference type="ChEBI" id="CHEBI:15378"/>
        <dbReference type="ChEBI" id="CHEBI:16526"/>
        <dbReference type="ChEBI" id="CHEBI:57308"/>
        <dbReference type="ChEBI" id="CHEBI:57309"/>
        <dbReference type="EC" id="4.1.1.37"/>
    </reaction>
</comment>
<comment type="pathway">
    <text evidence="1">Porphyrin-containing compound metabolism; protoporphyrin-IX biosynthesis; coproporphyrinogen-III from 5-aminolevulinate: step 4/4.</text>
</comment>
<comment type="subunit">
    <text evidence="1">Homodimer.</text>
</comment>
<comment type="subcellular location">
    <subcellularLocation>
        <location evidence="1">Cytoplasm</location>
    </subcellularLocation>
</comment>
<comment type="similarity">
    <text evidence="1">Belongs to the uroporphyrinogen decarboxylase family.</text>
</comment>
<evidence type="ECO:0000255" key="1">
    <source>
        <dbReference type="HAMAP-Rule" id="MF_00218"/>
    </source>
</evidence>
<protein>
    <recommendedName>
        <fullName evidence="1">Uroporphyrinogen decarboxylase</fullName>
        <shortName evidence="1">UPD</shortName>
        <shortName evidence="1">URO-D</shortName>
        <ecNumber evidence="1">4.1.1.37</ecNumber>
    </recommendedName>
</protein>
<reference key="1">
    <citation type="journal article" date="2007" name="Science">
        <title>The Calyptogena magnifica chemoautotrophic symbiont genome.</title>
        <authorList>
            <person name="Newton I.L.G."/>
            <person name="Woyke T."/>
            <person name="Auchtung T.A."/>
            <person name="Dilly G.F."/>
            <person name="Dutton R.J."/>
            <person name="Fisher M.C."/>
            <person name="Fontanez K.M."/>
            <person name="Lau E."/>
            <person name="Stewart F.J."/>
            <person name="Richardson P.M."/>
            <person name="Barry K.W."/>
            <person name="Saunders E."/>
            <person name="Detter J.C."/>
            <person name="Wu D."/>
            <person name="Eisen J.A."/>
            <person name="Cavanaugh C.M."/>
        </authorList>
    </citation>
    <scope>NUCLEOTIDE SEQUENCE [LARGE SCALE GENOMIC DNA]</scope>
</reference>
<dbReference type="EC" id="4.1.1.37" evidence="1"/>
<dbReference type="EMBL" id="CP000488">
    <property type="protein sequence ID" value="ABL02731.1"/>
    <property type="molecule type" value="Genomic_DNA"/>
</dbReference>
<dbReference type="RefSeq" id="WP_011738356.1">
    <property type="nucleotide sequence ID" value="NC_008610.1"/>
</dbReference>
<dbReference type="SMR" id="A1AXS4"/>
<dbReference type="STRING" id="413404.Rmag_1026"/>
<dbReference type="KEGG" id="rma:Rmag_1026"/>
<dbReference type="eggNOG" id="COG0407">
    <property type="taxonomic scope" value="Bacteria"/>
</dbReference>
<dbReference type="HOGENOM" id="CLU_040933_0_0_6"/>
<dbReference type="OrthoDB" id="9806656at2"/>
<dbReference type="UniPathway" id="UPA00251">
    <property type="reaction ID" value="UER00321"/>
</dbReference>
<dbReference type="Proteomes" id="UP000002587">
    <property type="component" value="Chromosome"/>
</dbReference>
<dbReference type="GO" id="GO:0005829">
    <property type="term" value="C:cytosol"/>
    <property type="evidence" value="ECO:0007669"/>
    <property type="project" value="TreeGrafter"/>
</dbReference>
<dbReference type="GO" id="GO:0004853">
    <property type="term" value="F:uroporphyrinogen decarboxylase activity"/>
    <property type="evidence" value="ECO:0007669"/>
    <property type="project" value="UniProtKB-UniRule"/>
</dbReference>
<dbReference type="GO" id="GO:0019353">
    <property type="term" value="P:protoporphyrinogen IX biosynthetic process from glutamate"/>
    <property type="evidence" value="ECO:0007669"/>
    <property type="project" value="TreeGrafter"/>
</dbReference>
<dbReference type="CDD" id="cd00717">
    <property type="entry name" value="URO-D"/>
    <property type="match status" value="1"/>
</dbReference>
<dbReference type="FunFam" id="3.20.20.210:FF:000001">
    <property type="entry name" value="Uroporphyrinogen decarboxylase"/>
    <property type="match status" value="1"/>
</dbReference>
<dbReference type="Gene3D" id="3.20.20.210">
    <property type="match status" value="1"/>
</dbReference>
<dbReference type="HAMAP" id="MF_00218">
    <property type="entry name" value="URO_D"/>
    <property type="match status" value="1"/>
</dbReference>
<dbReference type="InterPro" id="IPR038071">
    <property type="entry name" value="UROD/MetE-like_sf"/>
</dbReference>
<dbReference type="InterPro" id="IPR006361">
    <property type="entry name" value="Uroporphyrinogen_deCO2ase_HemE"/>
</dbReference>
<dbReference type="InterPro" id="IPR000257">
    <property type="entry name" value="Uroporphyrinogen_deCOase"/>
</dbReference>
<dbReference type="NCBIfam" id="TIGR01464">
    <property type="entry name" value="hemE"/>
    <property type="match status" value="1"/>
</dbReference>
<dbReference type="PANTHER" id="PTHR21091">
    <property type="entry name" value="METHYLTETRAHYDROFOLATE:HOMOCYSTEINE METHYLTRANSFERASE RELATED"/>
    <property type="match status" value="1"/>
</dbReference>
<dbReference type="PANTHER" id="PTHR21091:SF169">
    <property type="entry name" value="UROPORPHYRINOGEN DECARBOXYLASE"/>
    <property type="match status" value="1"/>
</dbReference>
<dbReference type="Pfam" id="PF01208">
    <property type="entry name" value="URO-D"/>
    <property type="match status" value="1"/>
</dbReference>
<dbReference type="SUPFAM" id="SSF51726">
    <property type="entry name" value="UROD/MetE-like"/>
    <property type="match status" value="1"/>
</dbReference>
<dbReference type="PROSITE" id="PS00906">
    <property type="entry name" value="UROD_1"/>
    <property type="match status" value="1"/>
</dbReference>
<dbReference type="PROSITE" id="PS00907">
    <property type="entry name" value="UROD_2"/>
    <property type="match status" value="1"/>
</dbReference>
<gene>
    <name evidence="1" type="primary">hemE</name>
    <name type="ordered locus">Rmag_1026</name>
</gene>
<accession>A1AXS4</accession>
<organism>
    <name type="scientific">Ruthia magnifica subsp. Calyptogena magnifica</name>
    <dbReference type="NCBI Taxonomy" id="413404"/>
    <lineage>
        <taxon>Bacteria</taxon>
        <taxon>Pseudomonadati</taxon>
        <taxon>Pseudomonadota</taxon>
        <taxon>Gammaproteobacteria</taxon>
        <taxon>Candidatus Pseudothioglobaceae</taxon>
        <taxon>Candidatus Ruthturnera</taxon>
    </lineage>
</organism>